<sequence>MTNTRKTHPLIKIINHSFVDLPTPSNISAWWNFGSLLGLCLVIQILTGLFLAMHYTSDTMTAFSSVTHICRDVNYGWLIRYMHANGASMFFICLFLHVGRGLYYGSYIYFETWNIGIILLFAVMATAFMGYVLPWGQMSFWGATVITNLLSAIPYIGTTLVEWIWGGFSVDKATLTRFFAFHFILPFIITALVVIHLLFLHETGSNNPSGLISNSDKIPFHPYYTIKDILGVLLLILTLMTLVLFSPDLLGDPDNYTPANPLNTPPHIKPEWYFLFAYAILRSIPNKLGGVLALIFSILILMIFPLLHLSKQRSMMFRPLSQCVFWILVADLFTLTWIGGQPVEHPFIIIGQLASILYFIIILLILPAVSMIENKLLKW</sequence>
<reference key="1">
    <citation type="journal article" date="2003" name="J. Mammal. Evol.">
        <title>Phylogeny and evolutionary history of the ground squirrels (Rodentia: Marmotinae).</title>
        <authorList>
            <person name="Harrison R.G."/>
            <person name="Bogdanowicz S.M."/>
            <person name="Hoffmann R.S."/>
            <person name="Yensen E."/>
            <person name="Sherman P.W."/>
        </authorList>
    </citation>
    <scope>NUCLEOTIDE SEQUENCE [GENOMIC DNA]</scope>
    <source>
        <strain>Isolate S50</strain>
        <strain>Isolate S58</strain>
    </source>
</reference>
<comment type="function">
    <text evidence="2">Component of the ubiquinol-cytochrome c reductase complex (complex III or cytochrome b-c1 complex) that is part of the mitochondrial respiratory chain. The b-c1 complex mediates electron transfer from ubiquinol to cytochrome c. Contributes to the generation of a proton gradient across the mitochondrial membrane that is then used for ATP synthesis.</text>
</comment>
<comment type="cofactor">
    <cofactor evidence="2">
        <name>heme b</name>
        <dbReference type="ChEBI" id="CHEBI:60344"/>
    </cofactor>
    <text evidence="2">Binds 2 heme b groups non-covalently.</text>
</comment>
<comment type="subunit">
    <text evidence="2">The cytochrome bc1 complex contains 11 subunits: 3 respiratory subunits (MT-CYB, CYC1 and UQCRFS1), 2 core proteins (UQCRC1 and UQCRC2) and 6 low-molecular weight proteins (UQCRH/QCR6, UQCRB/QCR7, UQCRQ/QCR8, UQCR10/QCR9, UQCR11/QCR10 and a cleavage product of UQCRFS1). This cytochrome bc1 complex then forms a dimer.</text>
</comment>
<comment type="subcellular location">
    <subcellularLocation>
        <location evidence="2">Mitochondrion inner membrane</location>
        <topology evidence="2">Multi-pass membrane protein</topology>
    </subcellularLocation>
</comment>
<comment type="miscellaneous">
    <text evidence="1">Heme 1 (or BL or b562) is low-potential and absorbs at about 562 nm, and heme 2 (or BH or b566) is high-potential and absorbs at about 566 nm.</text>
</comment>
<comment type="similarity">
    <text evidence="3 4">Belongs to the cytochrome b family.</text>
</comment>
<comment type="caution">
    <text evidence="2">The full-length protein contains only eight transmembrane helices, not nine as predicted by bioinformatics tools.</text>
</comment>
<keyword id="KW-0249">Electron transport</keyword>
<keyword id="KW-0349">Heme</keyword>
<keyword id="KW-0408">Iron</keyword>
<keyword id="KW-0472">Membrane</keyword>
<keyword id="KW-0479">Metal-binding</keyword>
<keyword id="KW-0496">Mitochondrion</keyword>
<keyword id="KW-0999">Mitochondrion inner membrane</keyword>
<keyword id="KW-0679">Respiratory chain</keyword>
<keyword id="KW-0812">Transmembrane</keyword>
<keyword id="KW-1133">Transmembrane helix</keyword>
<keyword id="KW-0813">Transport</keyword>
<keyword id="KW-0830">Ubiquinone</keyword>
<proteinExistence type="inferred from homology"/>
<feature type="chain" id="PRO_0000255144" description="Cytochrome b">
    <location>
        <begin position="1"/>
        <end position="379"/>
    </location>
</feature>
<feature type="transmembrane region" description="Helical" evidence="2">
    <location>
        <begin position="33"/>
        <end position="53"/>
    </location>
</feature>
<feature type="transmembrane region" description="Helical" evidence="2">
    <location>
        <begin position="77"/>
        <end position="98"/>
    </location>
</feature>
<feature type="transmembrane region" description="Helical" evidence="2">
    <location>
        <begin position="113"/>
        <end position="133"/>
    </location>
</feature>
<feature type="transmembrane region" description="Helical" evidence="2">
    <location>
        <begin position="178"/>
        <end position="198"/>
    </location>
</feature>
<feature type="transmembrane region" description="Helical" evidence="2">
    <location>
        <begin position="226"/>
        <end position="246"/>
    </location>
</feature>
<feature type="transmembrane region" description="Helical" evidence="2">
    <location>
        <begin position="288"/>
        <end position="308"/>
    </location>
</feature>
<feature type="transmembrane region" description="Helical" evidence="2">
    <location>
        <begin position="320"/>
        <end position="340"/>
    </location>
</feature>
<feature type="transmembrane region" description="Helical" evidence="2">
    <location>
        <begin position="347"/>
        <end position="367"/>
    </location>
</feature>
<feature type="binding site" description="axial binding residue" evidence="2">
    <location>
        <position position="83"/>
    </location>
    <ligand>
        <name>heme b</name>
        <dbReference type="ChEBI" id="CHEBI:60344"/>
        <label>b562</label>
    </ligand>
    <ligandPart>
        <name>Fe</name>
        <dbReference type="ChEBI" id="CHEBI:18248"/>
    </ligandPart>
</feature>
<feature type="binding site" description="axial binding residue" evidence="2">
    <location>
        <position position="97"/>
    </location>
    <ligand>
        <name>heme b</name>
        <dbReference type="ChEBI" id="CHEBI:60344"/>
        <label>b566</label>
    </ligand>
    <ligandPart>
        <name>Fe</name>
        <dbReference type="ChEBI" id="CHEBI:18248"/>
    </ligandPart>
</feature>
<feature type="binding site" description="axial binding residue" evidence="2">
    <location>
        <position position="182"/>
    </location>
    <ligand>
        <name>heme b</name>
        <dbReference type="ChEBI" id="CHEBI:60344"/>
        <label>b562</label>
    </ligand>
    <ligandPart>
        <name>Fe</name>
        <dbReference type="ChEBI" id="CHEBI:18248"/>
    </ligandPart>
</feature>
<feature type="binding site" description="axial binding residue" evidence="2">
    <location>
        <position position="196"/>
    </location>
    <ligand>
        <name>heme b</name>
        <dbReference type="ChEBI" id="CHEBI:60344"/>
        <label>b566</label>
    </ligand>
    <ligandPart>
        <name>Fe</name>
        <dbReference type="ChEBI" id="CHEBI:18248"/>
    </ligandPart>
</feature>
<feature type="binding site" evidence="2">
    <location>
        <position position="201"/>
    </location>
    <ligand>
        <name>a ubiquinone</name>
        <dbReference type="ChEBI" id="CHEBI:16389"/>
    </ligand>
</feature>
<feature type="sequence variant" description="In strain: Isolate S58.">
    <original>V</original>
    <variation>M</variation>
    <location>
        <position position="98"/>
    </location>
</feature>
<feature type="sequence variant" description="In strain: Isolate S58.">
    <original>I</original>
    <variation>T</variation>
    <location>
        <position position="303"/>
    </location>
</feature>
<protein>
    <recommendedName>
        <fullName>Cytochrome b</fullName>
    </recommendedName>
    <alternativeName>
        <fullName>Complex III subunit 3</fullName>
    </alternativeName>
    <alternativeName>
        <fullName>Complex III subunit III</fullName>
    </alternativeName>
    <alternativeName>
        <fullName>Cytochrome b-c1 complex subunit 3</fullName>
    </alternativeName>
    <alternativeName>
        <fullName>Ubiquinol-cytochrome-c reductase complex cytochrome b subunit</fullName>
    </alternativeName>
</protein>
<evidence type="ECO:0000250" key="1"/>
<evidence type="ECO:0000250" key="2">
    <source>
        <dbReference type="UniProtKB" id="P00157"/>
    </source>
</evidence>
<evidence type="ECO:0000255" key="3">
    <source>
        <dbReference type="PROSITE-ProRule" id="PRU00967"/>
    </source>
</evidence>
<evidence type="ECO:0000255" key="4">
    <source>
        <dbReference type="PROSITE-ProRule" id="PRU00968"/>
    </source>
</evidence>
<geneLocation type="mitochondrion"/>
<dbReference type="EMBL" id="AF157902">
    <property type="protein sequence ID" value="AAD50186.1"/>
    <property type="molecule type" value="Genomic_DNA"/>
</dbReference>
<dbReference type="EMBL" id="AF157909">
    <property type="protein sequence ID" value="AAD50193.1"/>
    <property type="molecule type" value="Genomic_DNA"/>
</dbReference>
<dbReference type="SMR" id="Q9TF50"/>
<dbReference type="GO" id="GO:0005743">
    <property type="term" value="C:mitochondrial inner membrane"/>
    <property type="evidence" value="ECO:0007669"/>
    <property type="project" value="UniProtKB-SubCell"/>
</dbReference>
<dbReference type="GO" id="GO:0045275">
    <property type="term" value="C:respiratory chain complex III"/>
    <property type="evidence" value="ECO:0007669"/>
    <property type="project" value="InterPro"/>
</dbReference>
<dbReference type="GO" id="GO:0046872">
    <property type="term" value="F:metal ion binding"/>
    <property type="evidence" value="ECO:0007669"/>
    <property type="project" value="UniProtKB-KW"/>
</dbReference>
<dbReference type="GO" id="GO:0008121">
    <property type="term" value="F:ubiquinol-cytochrome-c reductase activity"/>
    <property type="evidence" value="ECO:0007669"/>
    <property type="project" value="InterPro"/>
</dbReference>
<dbReference type="GO" id="GO:0006122">
    <property type="term" value="P:mitochondrial electron transport, ubiquinol to cytochrome c"/>
    <property type="evidence" value="ECO:0007669"/>
    <property type="project" value="TreeGrafter"/>
</dbReference>
<dbReference type="CDD" id="cd00290">
    <property type="entry name" value="cytochrome_b_C"/>
    <property type="match status" value="1"/>
</dbReference>
<dbReference type="CDD" id="cd00284">
    <property type="entry name" value="Cytochrome_b_N"/>
    <property type="match status" value="1"/>
</dbReference>
<dbReference type="FunFam" id="1.20.810.10:FF:000002">
    <property type="entry name" value="Cytochrome b"/>
    <property type="match status" value="1"/>
</dbReference>
<dbReference type="Gene3D" id="1.20.810.10">
    <property type="entry name" value="Cytochrome Bc1 Complex, Chain C"/>
    <property type="match status" value="1"/>
</dbReference>
<dbReference type="InterPro" id="IPR005798">
    <property type="entry name" value="Cyt_b/b6_C"/>
</dbReference>
<dbReference type="InterPro" id="IPR036150">
    <property type="entry name" value="Cyt_b/b6_C_sf"/>
</dbReference>
<dbReference type="InterPro" id="IPR005797">
    <property type="entry name" value="Cyt_b/b6_N"/>
</dbReference>
<dbReference type="InterPro" id="IPR027387">
    <property type="entry name" value="Cytb/b6-like_sf"/>
</dbReference>
<dbReference type="InterPro" id="IPR030689">
    <property type="entry name" value="Cytochrome_b"/>
</dbReference>
<dbReference type="InterPro" id="IPR048260">
    <property type="entry name" value="Cytochrome_b_C_euk/bac"/>
</dbReference>
<dbReference type="InterPro" id="IPR048259">
    <property type="entry name" value="Cytochrome_b_N_euk/bac"/>
</dbReference>
<dbReference type="InterPro" id="IPR016174">
    <property type="entry name" value="Di-haem_cyt_TM"/>
</dbReference>
<dbReference type="PANTHER" id="PTHR19271">
    <property type="entry name" value="CYTOCHROME B"/>
    <property type="match status" value="1"/>
</dbReference>
<dbReference type="PANTHER" id="PTHR19271:SF16">
    <property type="entry name" value="CYTOCHROME B"/>
    <property type="match status" value="1"/>
</dbReference>
<dbReference type="Pfam" id="PF00032">
    <property type="entry name" value="Cytochrom_B_C"/>
    <property type="match status" value="1"/>
</dbReference>
<dbReference type="Pfam" id="PF00033">
    <property type="entry name" value="Cytochrome_B"/>
    <property type="match status" value="1"/>
</dbReference>
<dbReference type="PIRSF" id="PIRSF038885">
    <property type="entry name" value="COB"/>
    <property type="match status" value="1"/>
</dbReference>
<dbReference type="SUPFAM" id="SSF81648">
    <property type="entry name" value="a domain/subunit of cytochrome bc1 complex (Ubiquinol-cytochrome c reductase)"/>
    <property type="match status" value="1"/>
</dbReference>
<dbReference type="SUPFAM" id="SSF81342">
    <property type="entry name" value="Transmembrane di-heme cytochromes"/>
    <property type="match status" value="1"/>
</dbReference>
<dbReference type="PROSITE" id="PS51003">
    <property type="entry name" value="CYTB_CTER"/>
    <property type="match status" value="1"/>
</dbReference>
<dbReference type="PROSITE" id="PS51002">
    <property type="entry name" value="CYTB_NTER"/>
    <property type="match status" value="1"/>
</dbReference>
<name>CYB_SPEXA</name>
<gene>
    <name type="primary">MT-CYB</name>
    <name type="synonym">COB</name>
    <name type="synonym">CYTB</name>
    <name type="synonym">MTCYB</name>
</gene>
<organism>
    <name type="scientific">Spermophilus xanthoprymnus</name>
    <name type="common">Asia Minor ground squirrel</name>
    <dbReference type="NCBI Taxonomy" id="99869"/>
    <lineage>
        <taxon>Eukaryota</taxon>
        <taxon>Metazoa</taxon>
        <taxon>Chordata</taxon>
        <taxon>Craniata</taxon>
        <taxon>Vertebrata</taxon>
        <taxon>Euteleostomi</taxon>
        <taxon>Mammalia</taxon>
        <taxon>Eutheria</taxon>
        <taxon>Euarchontoglires</taxon>
        <taxon>Glires</taxon>
        <taxon>Rodentia</taxon>
        <taxon>Sciuromorpha</taxon>
        <taxon>Sciuridae</taxon>
        <taxon>Xerinae</taxon>
        <taxon>Marmotini</taxon>
        <taxon>Spermophilus</taxon>
    </lineage>
</organism>
<accession>Q9TF50</accession>
<accession>Q9TF44</accession>